<dbReference type="EC" id="7.4.2.8" evidence="1"/>
<dbReference type="EMBL" id="BA000017">
    <property type="protein sequence ID" value="BAB56915.1"/>
    <property type="molecule type" value="Genomic_DNA"/>
</dbReference>
<dbReference type="SMR" id="Q99VM2"/>
<dbReference type="KEGG" id="sav:SAV0753"/>
<dbReference type="HOGENOM" id="CLU_005314_3_0_9"/>
<dbReference type="PhylomeDB" id="Q99VM2"/>
<dbReference type="Proteomes" id="UP000002481">
    <property type="component" value="Chromosome"/>
</dbReference>
<dbReference type="GO" id="GO:0031522">
    <property type="term" value="C:cell envelope Sec protein transport complex"/>
    <property type="evidence" value="ECO:0007669"/>
    <property type="project" value="TreeGrafter"/>
</dbReference>
<dbReference type="GO" id="GO:0005829">
    <property type="term" value="C:cytosol"/>
    <property type="evidence" value="ECO:0007669"/>
    <property type="project" value="TreeGrafter"/>
</dbReference>
<dbReference type="GO" id="GO:0005886">
    <property type="term" value="C:plasma membrane"/>
    <property type="evidence" value="ECO:0007669"/>
    <property type="project" value="UniProtKB-SubCell"/>
</dbReference>
<dbReference type="GO" id="GO:0005524">
    <property type="term" value="F:ATP binding"/>
    <property type="evidence" value="ECO:0007669"/>
    <property type="project" value="UniProtKB-UniRule"/>
</dbReference>
<dbReference type="GO" id="GO:0046872">
    <property type="term" value="F:metal ion binding"/>
    <property type="evidence" value="ECO:0007669"/>
    <property type="project" value="UniProtKB-KW"/>
</dbReference>
<dbReference type="GO" id="GO:0008564">
    <property type="term" value="F:protein-exporting ATPase activity"/>
    <property type="evidence" value="ECO:0007669"/>
    <property type="project" value="UniProtKB-EC"/>
</dbReference>
<dbReference type="GO" id="GO:0065002">
    <property type="term" value="P:intracellular protein transmembrane transport"/>
    <property type="evidence" value="ECO:0007669"/>
    <property type="project" value="UniProtKB-UniRule"/>
</dbReference>
<dbReference type="GO" id="GO:0017038">
    <property type="term" value="P:protein import"/>
    <property type="evidence" value="ECO:0007669"/>
    <property type="project" value="InterPro"/>
</dbReference>
<dbReference type="GO" id="GO:0006605">
    <property type="term" value="P:protein targeting"/>
    <property type="evidence" value="ECO:0007669"/>
    <property type="project" value="UniProtKB-UniRule"/>
</dbReference>
<dbReference type="GO" id="GO:0043952">
    <property type="term" value="P:protein transport by the Sec complex"/>
    <property type="evidence" value="ECO:0007669"/>
    <property type="project" value="TreeGrafter"/>
</dbReference>
<dbReference type="CDD" id="cd17928">
    <property type="entry name" value="DEXDc_SecA"/>
    <property type="match status" value="1"/>
</dbReference>
<dbReference type="CDD" id="cd18803">
    <property type="entry name" value="SF2_C_secA"/>
    <property type="match status" value="1"/>
</dbReference>
<dbReference type="FunFam" id="3.40.50.300:FF:000694">
    <property type="entry name" value="Preprotein translocase subunit SecA"/>
    <property type="match status" value="1"/>
</dbReference>
<dbReference type="FunFam" id="3.90.1440.10:FF:000002">
    <property type="entry name" value="Protein translocase subunit SecA"/>
    <property type="match status" value="1"/>
</dbReference>
<dbReference type="Gene3D" id="1.10.3060.10">
    <property type="entry name" value="Helical scaffold and wing domains of SecA"/>
    <property type="match status" value="1"/>
</dbReference>
<dbReference type="Gene3D" id="3.40.50.300">
    <property type="entry name" value="P-loop containing nucleotide triphosphate hydrolases"/>
    <property type="match status" value="2"/>
</dbReference>
<dbReference type="Gene3D" id="3.90.1440.10">
    <property type="entry name" value="SecA, preprotein cross-linking domain"/>
    <property type="match status" value="1"/>
</dbReference>
<dbReference type="HAMAP" id="MF_01382">
    <property type="entry name" value="SecA"/>
    <property type="match status" value="1"/>
</dbReference>
<dbReference type="InterPro" id="IPR014001">
    <property type="entry name" value="Helicase_ATP-bd"/>
</dbReference>
<dbReference type="InterPro" id="IPR001650">
    <property type="entry name" value="Helicase_C-like"/>
</dbReference>
<dbReference type="InterPro" id="IPR027417">
    <property type="entry name" value="P-loop_NTPase"/>
</dbReference>
<dbReference type="InterPro" id="IPR004027">
    <property type="entry name" value="SEC_C_motif"/>
</dbReference>
<dbReference type="InterPro" id="IPR000185">
    <property type="entry name" value="SecA"/>
</dbReference>
<dbReference type="InterPro" id="IPR020937">
    <property type="entry name" value="SecA_CS"/>
</dbReference>
<dbReference type="InterPro" id="IPR011115">
    <property type="entry name" value="SecA_DEAD"/>
</dbReference>
<dbReference type="InterPro" id="IPR014018">
    <property type="entry name" value="SecA_motor_DEAD"/>
</dbReference>
<dbReference type="InterPro" id="IPR011130">
    <property type="entry name" value="SecA_preprotein_X-link_dom"/>
</dbReference>
<dbReference type="InterPro" id="IPR044722">
    <property type="entry name" value="SecA_SF2_C"/>
</dbReference>
<dbReference type="InterPro" id="IPR011116">
    <property type="entry name" value="SecA_Wing/Scaffold"/>
</dbReference>
<dbReference type="InterPro" id="IPR036266">
    <property type="entry name" value="SecA_Wing/Scaffold_sf"/>
</dbReference>
<dbReference type="InterPro" id="IPR036670">
    <property type="entry name" value="SecA_X-link_sf"/>
</dbReference>
<dbReference type="NCBIfam" id="NF006630">
    <property type="entry name" value="PRK09200.1"/>
    <property type="match status" value="1"/>
</dbReference>
<dbReference type="NCBIfam" id="TIGR00963">
    <property type="entry name" value="secA"/>
    <property type="match status" value="1"/>
</dbReference>
<dbReference type="PANTHER" id="PTHR30612:SF0">
    <property type="entry name" value="CHLOROPLAST PROTEIN-TRANSPORTING ATPASE"/>
    <property type="match status" value="1"/>
</dbReference>
<dbReference type="PANTHER" id="PTHR30612">
    <property type="entry name" value="SECA INNER MEMBRANE COMPONENT OF SEC PROTEIN SECRETION SYSTEM"/>
    <property type="match status" value="1"/>
</dbReference>
<dbReference type="Pfam" id="PF21090">
    <property type="entry name" value="P-loop_SecA"/>
    <property type="match status" value="1"/>
</dbReference>
<dbReference type="Pfam" id="PF02810">
    <property type="entry name" value="SEC-C"/>
    <property type="match status" value="1"/>
</dbReference>
<dbReference type="Pfam" id="PF07517">
    <property type="entry name" value="SecA_DEAD"/>
    <property type="match status" value="1"/>
</dbReference>
<dbReference type="Pfam" id="PF01043">
    <property type="entry name" value="SecA_PP_bind"/>
    <property type="match status" value="1"/>
</dbReference>
<dbReference type="Pfam" id="PF07516">
    <property type="entry name" value="SecA_SW"/>
    <property type="match status" value="1"/>
</dbReference>
<dbReference type="PRINTS" id="PR00906">
    <property type="entry name" value="SECA"/>
</dbReference>
<dbReference type="SMART" id="SM00957">
    <property type="entry name" value="SecA_DEAD"/>
    <property type="match status" value="1"/>
</dbReference>
<dbReference type="SMART" id="SM00958">
    <property type="entry name" value="SecA_PP_bind"/>
    <property type="match status" value="1"/>
</dbReference>
<dbReference type="SUPFAM" id="SSF81886">
    <property type="entry name" value="Helical scaffold and wing domains of SecA"/>
    <property type="match status" value="1"/>
</dbReference>
<dbReference type="SUPFAM" id="SSF52540">
    <property type="entry name" value="P-loop containing nucleoside triphosphate hydrolases"/>
    <property type="match status" value="2"/>
</dbReference>
<dbReference type="SUPFAM" id="SSF81767">
    <property type="entry name" value="Pre-protein crosslinking domain of SecA"/>
    <property type="match status" value="1"/>
</dbReference>
<dbReference type="PROSITE" id="PS01312">
    <property type="entry name" value="SECA"/>
    <property type="match status" value="1"/>
</dbReference>
<dbReference type="PROSITE" id="PS51196">
    <property type="entry name" value="SECA_MOTOR_DEAD"/>
    <property type="match status" value="1"/>
</dbReference>
<protein>
    <recommendedName>
        <fullName evidence="1">Protein translocase subunit SecA 1</fullName>
        <ecNumber evidence="1">7.4.2.8</ecNumber>
    </recommendedName>
</protein>
<organism>
    <name type="scientific">Staphylococcus aureus (strain Mu50 / ATCC 700699)</name>
    <dbReference type="NCBI Taxonomy" id="158878"/>
    <lineage>
        <taxon>Bacteria</taxon>
        <taxon>Bacillati</taxon>
        <taxon>Bacillota</taxon>
        <taxon>Bacilli</taxon>
        <taxon>Bacillales</taxon>
        <taxon>Staphylococcaceae</taxon>
        <taxon>Staphylococcus</taxon>
    </lineage>
</organism>
<keyword id="KW-0067">ATP-binding</keyword>
<keyword id="KW-1003">Cell membrane</keyword>
<keyword id="KW-0963">Cytoplasm</keyword>
<keyword id="KW-0472">Membrane</keyword>
<keyword id="KW-0479">Metal-binding</keyword>
<keyword id="KW-0547">Nucleotide-binding</keyword>
<keyword id="KW-0653">Protein transport</keyword>
<keyword id="KW-1278">Translocase</keyword>
<keyword id="KW-0811">Translocation</keyword>
<keyword id="KW-0813">Transport</keyword>
<keyword id="KW-0862">Zinc</keyword>
<comment type="function">
    <text evidence="1">Part of the Sec protein translocase complex. Interacts with the SecYEG preprotein conducting channel. Has a central role in coupling the hydrolysis of ATP to the transfer of proteins into and across the cell membrane, serving as an ATP-driven molecular motor driving the stepwise translocation of polypeptide chains across the membrane.</text>
</comment>
<comment type="catalytic activity">
    <reaction evidence="1">
        <text>ATP + H2O + cellular proteinSide 1 = ADP + phosphate + cellular proteinSide 2.</text>
        <dbReference type="EC" id="7.4.2.8"/>
    </reaction>
</comment>
<comment type="cofactor">
    <cofactor evidence="1">
        <name>Zn(2+)</name>
        <dbReference type="ChEBI" id="CHEBI:29105"/>
    </cofactor>
    <text evidence="1">May bind 1 zinc ion per subunit.</text>
</comment>
<comment type="subunit">
    <text evidence="1">Monomer and homodimer. Part of the essential Sec protein translocation apparatus which comprises SecA, SecYEG and auxiliary proteins SecDF. Other proteins may also be involved.</text>
</comment>
<comment type="subcellular location">
    <subcellularLocation>
        <location evidence="1">Cell membrane</location>
        <topology evidence="1">Peripheral membrane protein</topology>
        <orientation evidence="1">Cytoplasmic side</orientation>
    </subcellularLocation>
    <subcellularLocation>
        <location evidence="1">Cytoplasm</location>
    </subcellularLocation>
    <text evidence="1">Distribution is 50-50.</text>
</comment>
<comment type="similarity">
    <text evidence="1">Belongs to the SecA family.</text>
</comment>
<name>SECA1_STAAM</name>
<gene>
    <name evidence="1" type="primary">secA1</name>
    <name type="ordered locus">SAV0753</name>
</gene>
<sequence>MGFLSKILDGNNKEIKQLGKLADKVIALEEKTAILTDEEIRNKTKQFQTELADIDNVKKQNDYLDKILPEAYALVREGSKRVFNMTPYKVQIMGGIAIHKGDIAEMRTGEGKTLTATMPTYLNALAGRGVHVITVNEYLSSVQSEEMAELYNFLGLTVGLNLNSKTTEEKREAYAQDITYSTNNELGFDYLRDNMVNYSEDRVMRPLHFAIIDEVDSILIDEARTPLIISGEAEKSTSLYTQANVFAKMLKQDEDYKYDEKTKAVHLTEQGADKAERMFKVENLYDVQNVDVISHINTALRAHVTLQRDVDYMVVDGEVLIVDQFTGRTMPGRRFSEGLHQAIEAKEGVQIQNESKTMASITFQNYFRMYNKLAGMTGTAKTEEEEFRNIYNMTVTQIPTNKPVQRNDKSDLIYISQKGKFDAVVEDVVEKHKAGQPVLLGTVAVETSEYISNLLKKRGIRHDVLNAKNHEREAEIVAGAGQKGAVTIATNMAGRGTDIKLGEGVEELGGLAVIGTERHESRRIDDQLRGRSGRQGDKGDSRFYLSLQDELMIRFGSERLQKMMSRLGLDDSTPIESKMVSRAVESAQKRVEGNNFDARKRILEYDEVLRKQREIIYNERNSIIDEEDSSQVVDAMLRSTLQRSINYYINTADDEPEYQPFIDYINDIFLQEGDITEDDIKGKDAEDIFEVVWAKIEAAYQSQKDILEEQMNEFERMILLRSIDSHWTDHIDTMDQLRQGIHLRSYAQQNPLRDYQNEGHELFDIMMQNIEEDTCKFILKSVVQVEDNIEREKTTEFGEAKHVSAEDGKEKVKPKPIVKGDQVGRNDDCPCGSGKKFKNCHGK</sequence>
<reference key="1">
    <citation type="journal article" date="2001" name="Lancet">
        <title>Whole genome sequencing of meticillin-resistant Staphylococcus aureus.</title>
        <authorList>
            <person name="Kuroda M."/>
            <person name="Ohta T."/>
            <person name="Uchiyama I."/>
            <person name="Baba T."/>
            <person name="Yuzawa H."/>
            <person name="Kobayashi I."/>
            <person name="Cui L."/>
            <person name="Oguchi A."/>
            <person name="Aoki K."/>
            <person name="Nagai Y."/>
            <person name="Lian J.-Q."/>
            <person name="Ito T."/>
            <person name="Kanamori M."/>
            <person name="Matsumaru H."/>
            <person name="Maruyama A."/>
            <person name="Murakami H."/>
            <person name="Hosoyama A."/>
            <person name="Mizutani-Ui Y."/>
            <person name="Takahashi N.K."/>
            <person name="Sawano T."/>
            <person name="Inoue R."/>
            <person name="Kaito C."/>
            <person name="Sekimizu K."/>
            <person name="Hirakawa H."/>
            <person name="Kuhara S."/>
            <person name="Goto S."/>
            <person name="Yabuzaki J."/>
            <person name="Kanehisa M."/>
            <person name="Yamashita A."/>
            <person name="Oshima K."/>
            <person name="Furuya K."/>
            <person name="Yoshino C."/>
            <person name="Shiba T."/>
            <person name="Hattori M."/>
            <person name="Ogasawara N."/>
            <person name="Hayashi H."/>
            <person name="Hiramatsu K."/>
        </authorList>
    </citation>
    <scope>NUCLEOTIDE SEQUENCE [LARGE SCALE GENOMIC DNA]</scope>
    <source>
        <strain>Mu50 / ATCC 700699</strain>
    </source>
</reference>
<evidence type="ECO:0000255" key="1">
    <source>
        <dbReference type="HAMAP-Rule" id="MF_01382"/>
    </source>
</evidence>
<evidence type="ECO:0000256" key="2">
    <source>
        <dbReference type="SAM" id="MobiDB-lite"/>
    </source>
</evidence>
<proteinExistence type="inferred from homology"/>
<accession>Q99VM2</accession>
<feature type="chain" id="PRO_0000109603" description="Protein translocase subunit SecA 1">
    <location>
        <begin position="1"/>
        <end position="843"/>
    </location>
</feature>
<feature type="region of interest" description="Disordered" evidence="2">
    <location>
        <begin position="799"/>
        <end position="826"/>
    </location>
</feature>
<feature type="compositionally biased region" description="Basic and acidic residues" evidence="2">
    <location>
        <begin position="799"/>
        <end position="813"/>
    </location>
</feature>
<feature type="binding site" evidence="1">
    <location>
        <position position="91"/>
    </location>
    <ligand>
        <name>ATP</name>
        <dbReference type="ChEBI" id="CHEBI:30616"/>
    </ligand>
</feature>
<feature type="binding site" evidence="1">
    <location>
        <begin position="109"/>
        <end position="113"/>
    </location>
    <ligand>
        <name>ATP</name>
        <dbReference type="ChEBI" id="CHEBI:30616"/>
    </ligand>
</feature>
<feature type="binding site" evidence="1">
    <location>
        <position position="498"/>
    </location>
    <ligand>
        <name>ATP</name>
        <dbReference type="ChEBI" id="CHEBI:30616"/>
    </ligand>
</feature>
<feature type="binding site" evidence="1">
    <location>
        <position position="829"/>
    </location>
    <ligand>
        <name>Zn(2+)</name>
        <dbReference type="ChEBI" id="CHEBI:29105"/>
    </ligand>
</feature>
<feature type="binding site" evidence="1">
    <location>
        <position position="831"/>
    </location>
    <ligand>
        <name>Zn(2+)</name>
        <dbReference type="ChEBI" id="CHEBI:29105"/>
    </ligand>
</feature>
<feature type="binding site" evidence="1">
    <location>
        <position position="840"/>
    </location>
    <ligand>
        <name>Zn(2+)</name>
        <dbReference type="ChEBI" id="CHEBI:29105"/>
    </ligand>
</feature>
<feature type="binding site" evidence="1">
    <location>
        <position position="841"/>
    </location>
    <ligand>
        <name>Zn(2+)</name>
        <dbReference type="ChEBI" id="CHEBI:29105"/>
    </ligand>
</feature>